<evidence type="ECO:0000255" key="1">
    <source>
        <dbReference type="HAMAP-Rule" id="MF_01432"/>
    </source>
</evidence>
<gene>
    <name evidence="1" type="primary">rihC</name>
    <name type="ordered locus">SSPA0048</name>
</gene>
<proteinExistence type="inferred from homology"/>
<dbReference type="EC" id="3.2.-.-" evidence="1"/>
<dbReference type="EMBL" id="FM200053">
    <property type="protein sequence ID" value="CAR58159.1"/>
    <property type="molecule type" value="Genomic_DNA"/>
</dbReference>
<dbReference type="RefSeq" id="WP_000127284.1">
    <property type="nucleotide sequence ID" value="NC_011147.1"/>
</dbReference>
<dbReference type="SMR" id="B5BLL5"/>
<dbReference type="KEGG" id="sek:SSPA0048"/>
<dbReference type="HOGENOM" id="CLU_036838_2_2_6"/>
<dbReference type="Proteomes" id="UP000001869">
    <property type="component" value="Chromosome"/>
</dbReference>
<dbReference type="GO" id="GO:0005829">
    <property type="term" value="C:cytosol"/>
    <property type="evidence" value="ECO:0007669"/>
    <property type="project" value="TreeGrafter"/>
</dbReference>
<dbReference type="GO" id="GO:0008477">
    <property type="term" value="F:purine nucleosidase activity"/>
    <property type="evidence" value="ECO:0007669"/>
    <property type="project" value="TreeGrafter"/>
</dbReference>
<dbReference type="GO" id="GO:0006144">
    <property type="term" value="P:purine nucleobase metabolic process"/>
    <property type="evidence" value="ECO:0007669"/>
    <property type="project" value="UniProtKB-UniRule"/>
</dbReference>
<dbReference type="GO" id="GO:0006152">
    <property type="term" value="P:purine nucleoside catabolic process"/>
    <property type="evidence" value="ECO:0007669"/>
    <property type="project" value="TreeGrafter"/>
</dbReference>
<dbReference type="GO" id="GO:0006206">
    <property type="term" value="P:pyrimidine nucleobase metabolic process"/>
    <property type="evidence" value="ECO:0007669"/>
    <property type="project" value="UniProtKB-UniRule"/>
</dbReference>
<dbReference type="CDD" id="cd02651">
    <property type="entry name" value="nuc_hydro_IU_UC_XIUA"/>
    <property type="match status" value="1"/>
</dbReference>
<dbReference type="FunFam" id="3.90.245.10:FF:000002">
    <property type="entry name" value="Non-specific ribonucleoside hydrolase RihC"/>
    <property type="match status" value="1"/>
</dbReference>
<dbReference type="Gene3D" id="3.90.245.10">
    <property type="entry name" value="Ribonucleoside hydrolase-like"/>
    <property type="match status" value="1"/>
</dbReference>
<dbReference type="HAMAP" id="MF_01432">
    <property type="entry name" value="Nucleosid_hydro_RihC"/>
    <property type="match status" value="1"/>
</dbReference>
<dbReference type="InterPro" id="IPR001910">
    <property type="entry name" value="Inosine/uridine_hydrolase_dom"/>
</dbReference>
<dbReference type="InterPro" id="IPR023186">
    <property type="entry name" value="IUNH"/>
</dbReference>
<dbReference type="InterPro" id="IPR022976">
    <property type="entry name" value="Nucleosid_hydro_RihC_nonspecif"/>
</dbReference>
<dbReference type="InterPro" id="IPR036452">
    <property type="entry name" value="Ribo_hydro-like"/>
</dbReference>
<dbReference type="NCBIfam" id="NF008036">
    <property type="entry name" value="PRK10768.1"/>
    <property type="match status" value="1"/>
</dbReference>
<dbReference type="PANTHER" id="PTHR12304">
    <property type="entry name" value="INOSINE-URIDINE PREFERRING NUCLEOSIDE HYDROLASE"/>
    <property type="match status" value="1"/>
</dbReference>
<dbReference type="PANTHER" id="PTHR12304:SF15">
    <property type="entry name" value="NON-SPECIFIC RIBONUCLEOSIDE HYDROLASE RIHC"/>
    <property type="match status" value="1"/>
</dbReference>
<dbReference type="Pfam" id="PF01156">
    <property type="entry name" value="IU_nuc_hydro"/>
    <property type="match status" value="1"/>
</dbReference>
<dbReference type="SUPFAM" id="SSF53590">
    <property type="entry name" value="Nucleoside hydrolase"/>
    <property type="match status" value="1"/>
</dbReference>
<feature type="chain" id="PRO_1000145824" description="Non-specific ribonucleoside hydrolase RihC">
    <location>
        <begin position="1"/>
        <end position="304"/>
    </location>
</feature>
<feature type="active site" evidence="1">
    <location>
        <position position="235"/>
    </location>
</feature>
<name>RIHC_SALPK</name>
<sequence length="304" mass="33011">MTASLHIILDTDPGIDDAAAIAAALFAPQLDLQLITTVAGNVSVEKTTRNALQLLHFWNSDIPLAQGAATPLLRPLRDAAYVHGESGMEGYDFVDHQRQPLAKPAFISIRDVLMNAPEPMTLVAIGPLTNIALLLMHYPECACNIRRLVLMGGSAGRGNFTPNAEFNIAVDPEAAAHVFRSGIEIVMCGLDVTNQAMLSPDFLNKLPALNRTGKMLHSLFNHYRSGSMRTGVRMHDLCAIAWLVRPELFTLQSCFVAVETQGEYTAGTTVVDIEGRLGQPANAQMALDVDGFRQWVAEVFAYAP</sequence>
<keyword id="KW-0326">Glycosidase</keyword>
<keyword id="KW-0378">Hydrolase</keyword>
<reference key="1">
    <citation type="journal article" date="2009" name="BMC Genomics">
        <title>Pseudogene accumulation in the evolutionary histories of Salmonella enterica serovars Paratyphi A and Typhi.</title>
        <authorList>
            <person name="Holt K.E."/>
            <person name="Thomson N.R."/>
            <person name="Wain J."/>
            <person name="Langridge G.C."/>
            <person name="Hasan R."/>
            <person name="Bhutta Z.A."/>
            <person name="Quail M.A."/>
            <person name="Norbertczak H."/>
            <person name="Walker D."/>
            <person name="Simmonds M."/>
            <person name="White B."/>
            <person name="Bason N."/>
            <person name="Mungall K."/>
            <person name="Dougan G."/>
            <person name="Parkhill J."/>
        </authorList>
    </citation>
    <scope>NUCLEOTIDE SEQUENCE [LARGE SCALE GENOMIC DNA]</scope>
    <source>
        <strain>AKU_12601</strain>
    </source>
</reference>
<accession>B5BLL5</accession>
<protein>
    <recommendedName>
        <fullName evidence="1">Non-specific ribonucleoside hydrolase RihC</fullName>
        <ecNumber evidence="1">3.2.-.-</ecNumber>
    </recommendedName>
    <alternativeName>
        <fullName evidence="1">Purine/pyrimidine ribonucleoside hydrolase</fullName>
    </alternativeName>
</protein>
<organism>
    <name type="scientific">Salmonella paratyphi A (strain AKU_12601)</name>
    <dbReference type="NCBI Taxonomy" id="554290"/>
    <lineage>
        <taxon>Bacteria</taxon>
        <taxon>Pseudomonadati</taxon>
        <taxon>Pseudomonadota</taxon>
        <taxon>Gammaproteobacteria</taxon>
        <taxon>Enterobacterales</taxon>
        <taxon>Enterobacteriaceae</taxon>
        <taxon>Salmonella</taxon>
    </lineage>
</organism>
<comment type="function">
    <text evidence="1">Hydrolyzes both purine and pyrimidine ribonucleosides with a broad-substrate specificity.</text>
</comment>
<comment type="similarity">
    <text evidence="1">Belongs to the IUNH family. RihC subfamily.</text>
</comment>